<reference key="1">
    <citation type="submission" date="2009-01" db="EMBL/GenBank/DDBJ databases">
        <title>Complete sequence of Chloroflexus sp. Y-400-fl.</title>
        <authorList>
            <consortium name="US DOE Joint Genome Institute"/>
            <person name="Lucas S."/>
            <person name="Copeland A."/>
            <person name="Lapidus A."/>
            <person name="Glavina del Rio T."/>
            <person name="Dalin E."/>
            <person name="Tice H."/>
            <person name="Bruce D."/>
            <person name="Goodwin L."/>
            <person name="Pitluck S."/>
            <person name="Sims D."/>
            <person name="Kiss H."/>
            <person name="Brettin T."/>
            <person name="Detter J.C."/>
            <person name="Han C."/>
            <person name="Larimer F."/>
            <person name="Land M."/>
            <person name="Hauser L."/>
            <person name="Kyrpides N."/>
            <person name="Ovchinnikova G."/>
            <person name="Bryant D.A."/>
            <person name="Richardson P."/>
        </authorList>
    </citation>
    <scope>NUCLEOTIDE SEQUENCE [LARGE SCALE GENOMIC DNA]</scope>
    <source>
        <strain>ATCC 29364 / DSM 637 / Y-400-fl</strain>
    </source>
</reference>
<organism>
    <name type="scientific">Chloroflexus aurantiacus (strain ATCC 29364 / DSM 637 / Y-400-fl)</name>
    <dbReference type="NCBI Taxonomy" id="480224"/>
    <lineage>
        <taxon>Bacteria</taxon>
        <taxon>Bacillati</taxon>
        <taxon>Chloroflexota</taxon>
        <taxon>Chloroflexia</taxon>
        <taxon>Chloroflexales</taxon>
        <taxon>Chloroflexineae</taxon>
        <taxon>Chloroflexaceae</taxon>
        <taxon>Chloroflexus</taxon>
    </lineage>
</organism>
<gene>
    <name evidence="1" type="primary">rpsH</name>
    <name type="ordered locus">Chy400_2570</name>
</gene>
<feature type="chain" id="PRO_1000165319" description="Small ribosomal subunit protein uS8">
    <location>
        <begin position="1"/>
        <end position="133"/>
    </location>
</feature>
<accession>B9LJE6</accession>
<protein>
    <recommendedName>
        <fullName evidence="1">Small ribosomal subunit protein uS8</fullName>
    </recommendedName>
    <alternativeName>
        <fullName evidence="2">30S ribosomal protein S8</fullName>
    </alternativeName>
</protein>
<evidence type="ECO:0000255" key="1">
    <source>
        <dbReference type="HAMAP-Rule" id="MF_01302"/>
    </source>
</evidence>
<evidence type="ECO:0000305" key="2"/>
<name>RS8_CHLSY</name>
<proteinExistence type="inferred from homology"/>
<keyword id="KW-0687">Ribonucleoprotein</keyword>
<keyword id="KW-0689">Ribosomal protein</keyword>
<keyword id="KW-0694">RNA-binding</keyword>
<keyword id="KW-0699">rRNA-binding</keyword>
<dbReference type="EMBL" id="CP001364">
    <property type="protein sequence ID" value="ACM53962.1"/>
    <property type="molecule type" value="Genomic_DNA"/>
</dbReference>
<dbReference type="SMR" id="B9LJE6"/>
<dbReference type="KEGG" id="chl:Chy400_2570"/>
<dbReference type="HOGENOM" id="CLU_098428_0_2_0"/>
<dbReference type="OrthoDB" id="9802617at2"/>
<dbReference type="GO" id="GO:1990904">
    <property type="term" value="C:ribonucleoprotein complex"/>
    <property type="evidence" value="ECO:0007669"/>
    <property type="project" value="UniProtKB-KW"/>
</dbReference>
<dbReference type="GO" id="GO:0005840">
    <property type="term" value="C:ribosome"/>
    <property type="evidence" value="ECO:0007669"/>
    <property type="project" value="UniProtKB-KW"/>
</dbReference>
<dbReference type="GO" id="GO:0019843">
    <property type="term" value="F:rRNA binding"/>
    <property type="evidence" value="ECO:0007669"/>
    <property type="project" value="UniProtKB-UniRule"/>
</dbReference>
<dbReference type="GO" id="GO:0003735">
    <property type="term" value="F:structural constituent of ribosome"/>
    <property type="evidence" value="ECO:0007669"/>
    <property type="project" value="InterPro"/>
</dbReference>
<dbReference type="GO" id="GO:0006412">
    <property type="term" value="P:translation"/>
    <property type="evidence" value="ECO:0007669"/>
    <property type="project" value="UniProtKB-UniRule"/>
</dbReference>
<dbReference type="FunFam" id="3.30.1370.30:FF:000002">
    <property type="entry name" value="30S ribosomal protein S8"/>
    <property type="match status" value="1"/>
</dbReference>
<dbReference type="FunFam" id="3.30.1490.10:FF:000001">
    <property type="entry name" value="30S ribosomal protein S8"/>
    <property type="match status" value="1"/>
</dbReference>
<dbReference type="Gene3D" id="3.30.1370.30">
    <property type="match status" value="1"/>
</dbReference>
<dbReference type="Gene3D" id="3.30.1490.10">
    <property type="match status" value="1"/>
</dbReference>
<dbReference type="HAMAP" id="MF_01302_B">
    <property type="entry name" value="Ribosomal_uS8_B"/>
    <property type="match status" value="1"/>
</dbReference>
<dbReference type="InterPro" id="IPR000630">
    <property type="entry name" value="Ribosomal_uS8"/>
</dbReference>
<dbReference type="InterPro" id="IPR035987">
    <property type="entry name" value="Ribosomal_uS8_sf"/>
</dbReference>
<dbReference type="NCBIfam" id="NF001109">
    <property type="entry name" value="PRK00136.1"/>
    <property type="match status" value="1"/>
</dbReference>
<dbReference type="PANTHER" id="PTHR11758">
    <property type="entry name" value="40S RIBOSOMAL PROTEIN S15A"/>
    <property type="match status" value="1"/>
</dbReference>
<dbReference type="Pfam" id="PF00410">
    <property type="entry name" value="Ribosomal_S8"/>
    <property type="match status" value="1"/>
</dbReference>
<dbReference type="SUPFAM" id="SSF56047">
    <property type="entry name" value="Ribosomal protein S8"/>
    <property type="match status" value="1"/>
</dbReference>
<comment type="function">
    <text evidence="1">One of the primary rRNA binding proteins, it binds directly to 16S rRNA central domain where it helps coordinate assembly of the platform of the 30S subunit.</text>
</comment>
<comment type="subunit">
    <text evidence="1">Part of the 30S ribosomal subunit. Contacts proteins S5 and S12.</text>
</comment>
<comment type="similarity">
    <text evidence="1">Belongs to the universal ribosomal protein uS8 family.</text>
</comment>
<sequence length="133" mass="14976">MSVNDPIGDMLTRIRNACMARHTTVSMPASNMKEAIARILKREGFIRDYAVIDDGKSHKTITITLKYLPDRRPAITGLRRVSKPGLRIYTKRTDIPRVRGGLGLCILSTPKGVLADHEAWRERVGGEVLCYVW</sequence>